<protein>
    <recommendedName>
        <fullName evidence="1">Large ribosomal subunit protein uL4</fullName>
    </recommendedName>
    <alternativeName>
        <fullName evidence="3">50S ribosomal protein L4</fullName>
    </alternativeName>
</protein>
<name>RL4_HELPS</name>
<comment type="function">
    <text evidence="1">One of the primary rRNA binding proteins, this protein initially binds near the 5'-end of the 23S rRNA. It is important during the early stages of 50S assembly. It makes multiple contacts with different domains of the 23S rRNA in the assembled 50S subunit and ribosome.</text>
</comment>
<comment type="function">
    <text evidence="1">Forms part of the polypeptide exit tunnel.</text>
</comment>
<comment type="subunit">
    <text evidence="1">Part of the 50S ribosomal subunit.</text>
</comment>
<comment type="similarity">
    <text evidence="1">Belongs to the universal ribosomal protein uL4 family.</text>
</comment>
<gene>
    <name evidence="1" type="primary">rplD</name>
    <name type="ordered locus">HPSH_06815</name>
</gene>
<proteinExistence type="inferred from homology"/>
<reference key="1">
    <citation type="submission" date="2008-05" db="EMBL/GenBank/DDBJ databases">
        <title>Genome sequence of Helicobacter pylori from the remote Amazon: traces of Asian ancestry of the first Americans.</title>
        <authorList>
            <person name="Kersulyte D."/>
            <person name="Kalia A."/>
            <person name="Gilman R.H."/>
            <person name="Berg D.E."/>
        </authorList>
    </citation>
    <scope>NUCLEOTIDE SEQUENCE [LARGE SCALE GENOMIC DNA]</scope>
    <source>
        <strain>Shi470</strain>
    </source>
</reference>
<feature type="chain" id="PRO_1000142136" description="Large ribosomal subunit protein uL4">
    <location>
        <begin position="1"/>
        <end position="215"/>
    </location>
</feature>
<feature type="region of interest" description="Disordered" evidence="2">
    <location>
        <begin position="46"/>
        <end position="72"/>
    </location>
</feature>
<feature type="compositionally biased region" description="Gly residues" evidence="2">
    <location>
        <begin position="56"/>
        <end position="71"/>
    </location>
</feature>
<sequence>MSKAIVLDSHLKEKGSVELPKRYEGINSHNLYLYVKHYLSSARANTAKSKNRAEVSGGGRKPWAQKGGGRARAGSITSPVFVGGGVSHGATNNRNYNLKINKKQKRLALEYALEEKAQANKLFVVEKIAIKGVVEDNKRKHLTKEANQMFQALEQRDTLFVCMNMDEYTELAFSNLKKCLIIDVSELNAYLLAAFSSVVMEEAAFQHVVQDKTEE</sequence>
<dbReference type="EMBL" id="CP001072">
    <property type="protein sequence ID" value="ACD48763.1"/>
    <property type="molecule type" value="Genomic_DNA"/>
</dbReference>
<dbReference type="RefSeq" id="WP_000030157.1">
    <property type="nucleotide sequence ID" value="NC_010698.2"/>
</dbReference>
<dbReference type="SMR" id="B2UV81"/>
<dbReference type="KEGG" id="hps:HPSH_06815"/>
<dbReference type="HOGENOM" id="CLU_041575_5_2_7"/>
<dbReference type="GO" id="GO:1990904">
    <property type="term" value="C:ribonucleoprotein complex"/>
    <property type="evidence" value="ECO:0007669"/>
    <property type="project" value="UniProtKB-KW"/>
</dbReference>
<dbReference type="GO" id="GO:0005840">
    <property type="term" value="C:ribosome"/>
    <property type="evidence" value="ECO:0007669"/>
    <property type="project" value="UniProtKB-KW"/>
</dbReference>
<dbReference type="GO" id="GO:0019843">
    <property type="term" value="F:rRNA binding"/>
    <property type="evidence" value="ECO:0007669"/>
    <property type="project" value="UniProtKB-UniRule"/>
</dbReference>
<dbReference type="GO" id="GO:0003735">
    <property type="term" value="F:structural constituent of ribosome"/>
    <property type="evidence" value="ECO:0007669"/>
    <property type="project" value="InterPro"/>
</dbReference>
<dbReference type="GO" id="GO:0006412">
    <property type="term" value="P:translation"/>
    <property type="evidence" value="ECO:0007669"/>
    <property type="project" value="UniProtKB-UniRule"/>
</dbReference>
<dbReference type="FunFam" id="3.40.1370.10:FF:000008">
    <property type="entry name" value="50S ribosomal protein L4"/>
    <property type="match status" value="1"/>
</dbReference>
<dbReference type="Gene3D" id="3.40.1370.10">
    <property type="match status" value="1"/>
</dbReference>
<dbReference type="HAMAP" id="MF_01328_B">
    <property type="entry name" value="Ribosomal_uL4_B"/>
    <property type="match status" value="1"/>
</dbReference>
<dbReference type="InterPro" id="IPR002136">
    <property type="entry name" value="Ribosomal_uL4"/>
</dbReference>
<dbReference type="InterPro" id="IPR013005">
    <property type="entry name" value="Ribosomal_uL4-like"/>
</dbReference>
<dbReference type="InterPro" id="IPR023574">
    <property type="entry name" value="Ribosomal_uL4_dom_sf"/>
</dbReference>
<dbReference type="NCBIfam" id="TIGR03953">
    <property type="entry name" value="rplD_bact"/>
    <property type="match status" value="1"/>
</dbReference>
<dbReference type="PANTHER" id="PTHR10746">
    <property type="entry name" value="50S RIBOSOMAL PROTEIN L4"/>
    <property type="match status" value="1"/>
</dbReference>
<dbReference type="PANTHER" id="PTHR10746:SF6">
    <property type="entry name" value="LARGE RIBOSOMAL SUBUNIT PROTEIN UL4M"/>
    <property type="match status" value="1"/>
</dbReference>
<dbReference type="Pfam" id="PF00573">
    <property type="entry name" value="Ribosomal_L4"/>
    <property type="match status" value="1"/>
</dbReference>
<dbReference type="SUPFAM" id="SSF52166">
    <property type="entry name" value="Ribosomal protein L4"/>
    <property type="match status" value="1"/>
</dbReference>
<keyword id="KW-0687">Ribonucleoprotein</keyword>
<keyword id="KW-0689">Ribosomal protein</keyword>
<keyword id="KW-0694">RNA-binding</keyword>
<keyword id="KW-0699">rRNA-binding</keyword>
<organism>
    <name type="scientific">Helicobacter pylori (strain Shi470)</name>
    <dbReference type="NCBI Taxonomy" id="512562"/>
    <lineage>
        <taxon>Bacteria</taxon>
        <taxon>Pseudomonadati</taxon>
        <taxon>Campylobacterota</taxon>
        <taxon>Epsilonproteobacteria</taxon>
        <taxon>Campylobacterales</taxon>
        <taxon>Helicobacteraceae</taxon>
        <taxon>Helicobacter</taxon>
    </lineage>
</organism>
<accession>B2UV81</accession>
<evidence type="ECO:0000255" key="1">
    <source>
        <dbReference type="HAMAP-Rule" id="MF_01328"/>
    </source>
</evidence>
<evidence type="ECO:0000256" key="2">
    <source>
        <dbReference type="SAM" id="MobiDB-lite"/>
    </source>
</evidence>
<evidence type="ECO:0000305" key="3"/>